<accession>A4VJ35</accession>
<protein>
    <recommendedName>
        <fullName evidence="1">Hydrogenobyrinate a,c-diamide synthase</fullName>
        <ecNumber evidence="1">6.3.5.9</ecNumber>
    </recommendedName>
    <alternativeName>
        <fullName evidence="1">Hydrogenobyrinic acid a,c-diamide synthase</fullName>
    </alternativeName>
</protein>
<reference key="1">
    <citation type="journal article" date="2008" name="Proc. Natl. Acad. Sci. U.S.A.">
        <title>Nitrogen fixation island and rhizosphere competence traits in the genome of root-associated Pseudomonas stutzeri A1501.</title>
        <authorList>
            <person name="Yan Y."/>
            <person name="Yang J."/>
            <person name="Dou Y."/>
            <person name="Chen M."/>
            <person name="Ping S."/>
            <person name="Peng J."/>
            <person name="Lu W."/>
            <person name="Zhang W."/>
            <person name="Yao Z."/>
            <person name="Li H."/>
            <person name="Liu W."/>
            <person name="He S."/>
            <person name="Geng L."/>
            <person name="Zhang X."/>
            <person name="Yang F."/>
            <person name="Yu H."/>
            <person name="Zhan Y."/>
            <person name="Li D."/>
            <person name="Lin Z."/>
            <person name="Wang Y."/>
            <person name="Elmerich C."/>
            <person name="Lin M."/>
            <person name="Jin Q."/>
        </authorList>
    </citation>
    <scope>NUCLEOTIDE SEQUENCE [LARGE SCALE GENOMIC DNA]</scope>
    <source>
        <strain>A1501</strain>
    </source>
</reference>
<organism>
    <name type="scientific">Stutzerimonas stutzeri (strain A1501)</name>
    <name type="common">Pseudomonas stutzeri</name>
    <dbReference type="NCBI Taxonomy" id="379731"/>
    <lineage>
        <taxon>Bacteria</taxon>
        <taxon>Pseudomonadati</taxon>
        <taxon>Pseudomonadota</taxon>
        <taxon>Gammaproteobacteria</taxon>
        <taxon>Pseudomonadales</taxon>
        <taxon>Pseudomonadaceae</taxon>
        <taxon>Stutzerimonas</taxon>
    </lineage>
</organism>
<feature type="chain" id="PRO_1000074394" description="Hydrogenobyrinate a,c-diamide synthase">
    <location>
        <begin position="1"/>
        <end position="430"/>
    </location>
</feature>
<feature type="domain" description="GATase cobBQ-type" evidence="1">
    <location>
        <begin position="239"/>
        <end position="422"/>
    </location>
</feature>
<feature type="active site" description="Nucleophile" evidence="1">
    <location>
        <position position="321"/>
    </location>
</feature>
<feature type="site" description="Increases nucleophilicity of active site Cys" evidence="1">
    <location>
        <position position="414"/>
    </location>
</feature>
<sequence>MTSRNCPALLIAAPASGQGKTTVTAALARLHARQGKRVRVFKCGPDFLDPMILARASGKPVYQLDLWMVGEEESRRLLWEAAGEADLILIEGVMGLFDGAPSAADLARRFGVPVLAVIDGSAMAQTFGALAHGLKSFQPELPFAGVLANRVGSTRHGEILRDSLPESIRWYGALPRSVDMELPSRHLGLVQAEELADLDARLDAAADALAQSAETELPPAVSFAAPTRVSLAPLLAGVRIGVARDAAFAFLYQANLDLLQALGAELLFFSPLRFARLPAVDSLYLPGGYPELHLRALSRNGPMAEAIRAHHAAGKPILAECGGMLYLLDGLTDRGDERAEMLGLLPGEARMQQRLSALALQEVELPEGRLRGHTFHHSMLESPLQPLARGECPNYKRTAEAVYRSGRLTASYIHFYLPSDPLAAAALLRP</sequence>
<name>COBB_STUS1</name>
<comment type="function">
    <text evidence="1">Catalyzes the ATP-dependent amidation of the two carboxylate groups at positions a and c of hydrogenobyrinate, using either L-glutamine or ammonia as the nitrogen source.</text>
</comment>
<comment type="catalytic activity">
    <reaction evidence="1">
        <text>hydrogenobyrinate + 2 L-glutamine + 2 ATP + 2 H2O = hydrogenobyrinate a,c-diamide + 2 L-glutamate + 2 ADP + 2 phosphate + 2 H(+)</text>
        <dbReference type="Rhea" id="RHEA:12544"/>
        <dbReference type="ChEBI" id="CHEBI:15377"/>
        <dbReference type="ChEBI" id="CHEBI:15378"/>
        <dbReference type="ChEBI" id="CHEBI:29985"/>
        <dbReference type="ChEBI" id="CHEBI:30616"/>
        <dbReference type="ChEBI" id="CHEBI:43474"/>
        <dbReference type="ChEBI" id="CHEBI:58359"/>
        <dbReference type="ChEBI" id="CHEBI:77873"/>
        <dbReference type="ChEBI" id="CHEBI:77874"/>
        <dbReference type="ChEBI" id="CHEBI:456216"/>
        <dbReference type="EC" id="6.3.5.9"/>
    </reaction>
</comment>
<comment type="cofactor">
    <cofactor evidence="1">
        <name>Mg(2+)</name>
        <dbReference type="ChEBI" id="CHEBI:18420"/>
    </cofactor>
</comment>
<comment type="pathway">
    <text evidence="1">Cofactor biosynthesis; adenosylcobalamin biosynthesis; cob(II)yrinate a,c-diamide from precorrin-2 (aerobic route): step 9/10.</text>
</comment>
<comment type="domain">
    <text evidence="1">Comprises of two domains. The C-terminal domain contains the binding site for glutamine and catalyzes the hydrolysis of this substrate to glutamate and ammonia. The N-terminal domain is anticipated to bind ATP and hydrogenobyrinate and catalyzes the ultimate synthesis of the diamide product. The ammonia produced via the glutaminase domain is probably translocated to the adjacent domain via a molecular tunnel, where it reacts with an activated intermediate.</text>
</comment>
<comment type="miscellaneous">
    <text evidence="1">The a and c carboxylates of hydrogenobyrinate are activated for nucleophilic attack via formation of a phosphorylated intermediate by ATP. CobB catalyzes first the amidation of the c-carboxylate, and then that of the a-carboxylate.</text>
</comment>
<comment type="similarity">
    <text evidence="1">Belongs to the CobB/CbiA family.</text>
</comment>
<gene>
    <name evidence="1" type="primary">cobB</name>
    <name type="ordered locus">PST_1292</name>
</gene>
<keyword id="KW-0067">ATP-binding</keyword>
<keyword id="KW-0169">Cobalamin biosynthesis</keyword>
<keyword id="KW-0315">Glutamine amidotransferase</keyword>
<keyword id="KW-0436">Ligase</keyword>
<keyword id="KW-0460">Magnesium</keyword>
<keyword id="KW-0547">Nucleotide-binding</keyword>
<keyword id="KW-1185">Reference proteome</keyword>
<evidence type="ECO:0000255" key="1">
    <source>
        <dbReference type="HAMAP-Rule" id="MF_00027"/>
    </source>
</evidence>
<dbReference type="EC" id="6.3.5.9" evidence="1"/>
<dbReference type="EMBL" id="CP000304">
    <property type="protein sequence ID" value="ABP78986.1"/>
    <property type="molecule type" value="Genomic_DNA"/>
</dbReference>
<dbReference type="RefSeq" id="WP_011912470.1">
    <property type="nucleotide sequence ID" value="NC_009434.1"/>
</dbReference>
<dbReference type="SMR" id="A4VJ35"/>
<dbReference type="KEGG" id="psa:PST_1292"/>
<dbReference type="eggNOG" id="COG1797">
    <property type="taxonomic scope" value="Bacteria"/>
</dbReference>
<dbReference type="HOGENOM" id="CLU_022752_0_2_6"/>
<dbReference type="UniPathway" id="UPA00148">
    <property type="reaction ID" value="UER00220"/>
</dbReference>
<dbReference type="Proteomes" id="UP000000233">
    <property type="component" value="Chromosome"/>
</dbReference>
<dbReference type="GO" id="GO:0005524">
    <property type="term" value="F:ATP binding"/>
    <property type="evidence" value="ECO:0007669"/>
    <property type="project" value="UniProtKB-UniRule"/>
</dbReference>
<dbReference type="GO" id="GO:0042242">
    <property type="term" value="F:cobyrinic acid a,c-diamide synthase activity"/>
    <property type="evidence" value="ECO:0007669"/>
    <property type="project" value="InterPro"/>
</dbReference>
<dbReference type="GO" id="GO:0043802">
    <property type="term" value="F:hydrogenobyrinic acid a,c-diamide synthase (glutamine-hydrolysing) activity"/>
    <property type="evidence" value="ECO:0007669"/>
    <property type="project" value="UniProtKB-UniRule"/>
</dbReference>
<dbReference type="GO" id="GO:0009236">
    <property type="term" value="P:cobalamin biosynthetic process"/>
    <property type="evidence" value="ECO:0007669"/>
    <property type="project" value="UniProtKB-UniRule"/>
</dbReference>
<dbReference type="CDD" id="cd05388">
    <property type="entry name" value="CobB_N"/>
    <property type="match status" value="1"/>
</dbReference>
<dbReference type="CDD" id="cd03130">
    <property type="entry name" value="GATase1_CobB"/>
    <property type="match status" value="1"/>
</dbReference>
<dbReference type="Gene3D" id="3.40.50.880">
    <property type="match status" value="1"/>
</dbReference>
<dbReference type="Gene3D" id="3.40.50.300">
    <property type="entry name" value="P-loop containing nucleotide triphosphate hydrolases"/>
    <property type="match status" value="1"/>
</dbReference>
<dbReference type="HAMAP" id="MF_00027">
    <property type="entry name" value="CobB_CbiA"/>
    <property type="match status" value="1"/>
</dbReference>
<dbReference type="InterPro" id="IPR004484">
    <property type="entry name" value="CbiA/CobB_synth"/>
</dbReference>
<dbReference type="InterPro" id="IPR029062">
    <property type="entry name" value="Class_I_gatase-like"/>
</dbReference>
<dbReference type="InterPro" id="IPR002586">
    <property type="entry name" value="CobQ/CobB/MinD/ParA_Nub-bd_dom"/>
</dbReference>
<dbReference type="InterPro" id="IPR011698">
    <property type="entry name" value="GATase_3"/>
</dbReference>
<dbReference type="InterPro" id="IPR027417">
    <property type="entry name" value="P-loop_NTPase"/>
</dbReference>
<dbReference type="NCBIfam" id="TIGR00379">
    <property type="entry name" value="cobB"/>
    <property type="match status" value="1"/>
</dbReference>
<dbReference type="NCBIfam" id="NF002204">
    <property type="entry name" value="PRK01077.1"/>
    <property type="match status" value="1"/>
</dbReference>
<dbReference type="PANTHER" id="PTHR43873">
    <property type="entry name" value="COBYRINATE A,C-DIAMIDE SYNTHASE"/>
    <property type="match status" value="1"/>
</dbReference>
<dbReference type="PANTHER" id="PTHR43873:SF1">
    <property type="entry name" value="COBYRINATE A,C-DIAMIDE SYNTHASE"/>
    <property type="match status" value="1"/>
</dbReference>
<dbReference type="Pfam" id="PF01656">
    <property type="entry name" value="CbiA"/>
    <property type="match status" value="1"/>
</dbReference>
<dbReference type="Pfam" id="PF07685">
    <property type="entry name" value="GATase_3"/>
    <property type="match status" value="1"/>
</dbReference>
<dbReference type="SUPFAM" id="SSF52317">
    <property type="entry name" value="Class I glutamine amidotransferase-like"/>
    <property type="match status" value="1"/>
</dbReference>
<dbReference type="SUPFAM" id="SSF52540">
    <property type="entry name" value="P-loop containing nucleoside triphosphate hydrolases"/>
    <property type="match status" value="1"/>
</dbReference>
<dbReference type="PROSITE" id="PS51274">
    <property type="entry name" value="GATASE_COBBQ"/>
    <property type="match status" value="1"/>
</dbReference>
<proteinExistence type="inferred from homology"/>